<comment type="function">
    <text evidence="1">This is one of the proteins that bind and probably mediate the attachment of the 5S RNA into the large ribosomal subunit, where it forms part of the central protuberance.</text>
</comment>
<comment type="subunit">
    <text evidence="1">Part of the 50S ribosomal subunit; part of the 5S rRNA/L5/L18/L25 subcomplex. Contacts the 5S and 23S rRNAs.</text>
</comment>
<comment type="similarity">
    <text evidence="1">Belongs to the universal ribosomal protein uL18 family.</text>
</comment>
<accession>Q21QN9</accession>
<sequence>MLTKKEQRLRRARQTRIRIATQGVARLTVNRTNLHIYASVISGDGVKVLASASTAEAEVRKALGGSGKGGNVAAAQAIGKRLAEKAKAVGVEKVAFDRAGFAYHGRVKALADAAREAGLQF</sequence>
<proteinExistence type="inferred from homology"/>
<evidence type="ECO:0000255" key="1">
    <source>
        <dbReference type="HAMAP-Rule" id="MF_01337"/>
    </source>
</evidence>
<evidence type="ECO:0000305" key="2"/>
<name>RL18_ALBFT</name>
<feature type="chain" id="PRO_0000251357" description="Large ribosomal subunit protein uL18">
    <location>
        <begin position="1"/>
        <end position="121"/>
    </location>
</feature>
<dbReference type="EMBL" id="CP000267">
    <property type="protein sequence ID" value="ABD71914.1"/>
    <property type="molecule type" value="Genomic_DNA"/>
</dbReference>
<dbReference type="RefSeq" id="WP_011466471.1">
    <property type="nucleotide sequence ID" value="NC_007908.1"/>
</dbReference>
<dbReference type="SMR" id="Q21QN9"/>
<dbReference type="STRING" id="338969.Rfer_4227"/>
<dbReference type="KEGG" id="rfr:Rfer_4227"/>
<dbReference type="eggNOG" id="COG0256">
    <property type="taxonomic scope" value="Bacteria"/>
</dbReference>
<dbReference type="HOGENOM" id="CLU_098841_0_1_4"/>
<dbReference type="OrthoDB" id="9810939at2"/>
<dbReference type="Proteomes" id="UP000008332">
    <property type="component" value="Chromosome"/>
</dbReference>
<dbReference type="GO" id="GO:0022625">
    <property type="term" value="C:cytosolic large ribosomal subunit"/>
    <property type="evidence" value="ECO:0007669"/>
    <property type="project" value="TreeGrafter"/>
</dbReference>
<dbReference type="GO" id="GO:0008097">
    <property type="term" value="F:5S rRNA binding"/>
    <property type="evidence" value="ECO:0007669"/>
    <property type="project" value="TreeGrafter"/>
</dbReference>
<dbReference type="GO" id="GO:0003735">
    <property type="term" value="F:structural constituent of ribosome"/>
    <property type="evidence" value="ECO:0007669"/>
    <property type="project" value="InterPro"/>
</dbReference>
<dbReference type="GO" id="GO:0006412">
    <property type="term" value="P:translation"/>
    <property type="evidence" value="ECO:0007669"/>
    <property type="project" value="UniProtKB-UniRule"/>
</dbReference>
<dbReference type="CDD" id="cd00432">
    <property type="entry name" value="Ribosomal_L18_L5e"/>
    <property type="match status" value="1"/>
</dbReference>
<dbReference type="FunFam" id="3.30.420.100:FF:000001">
    <property type="entry name" value="50S ribosomal protein L18"/>
    <property type="match status" value="1"/>
</dbReference>
<dbReference type="Gene3D" id="3.30.420.100">
    <property type="match status" value="1"/>
</dbReference>
<dbReference type="HAMAP" id="MF_01337_B">
    <property type="entry name" value="Ribosomal_uL18_B"/>
    <property type="match status" value="1"/>
</dbReference>
<dbReference type="InterPro" id="IPR004389">
    <property type="entry name" value="Ribosomal_uL18_bac-type"/>
</dbReference>
<dbReference type="InterPro" id="IPR005484">
    <property type="entry name" value="Ribosomal_uL18_bac/euk"/>
</dbReference>
<dbReference type="NCBIfam" id="TIGR00060">
    <property type="entry name" value="L18_bact"/>
    <property type="match status" value="1"/>
</dbReference>
<dbReference type="PANTHER" id="PTHR12899">
    <property type="entry name" value="39S RIBOSOMAL PROTEIN L18, MITOCHONDRIAL"/>
    <property type="match status" value="1"/>
</dbReference>
<dbReference type="PANTHER" id="PTHR12899:SF3">
    <property type="entry name" value="LARGE RIBOSOMAL SUBUNIT PROTEIN UL18M"/>
    <property type="match status" value="1"/>
</dbReference>
<dbReference type="Pfam" id="PF00861">
    <property type="entry name" value="Ribosomal_L18p"/>
    <property type="match status" value="1"/>
</dbReference>
<dbReference type="SUPFAM" id="SSF53137">
    <property type="entry name" value="Translational machinery components"/>
    <property type="match status" value="1"/>
</dbReference>
<reference key="1">
    <citation type="submission" date="2006-02" db="EMBL/GenBank/DDBJ databases">
        <title>Complete sequence of chromosome of Rhodoferax ferrireducens DSM 15236.</title>
        <authorList>
            <person name="Copeland A."/>
            <person name="Lucas S."/>
            <person name="Lapidus A."/>
            <person name="Barry K."/>
            <person name="Detter J.C."/>
            <person name="Glavina del Rio T."/>
            <person name="Hammon N."/>
            <person name="Israni S."/>
            <person name="Pitluck S."/>
            <person name="Brettin T."/>
            <person name="Bruce D."/>
            <person name="Han C."/>
            <person name="Tapia R."/>
            <person name="Gilna P."/>
            <person name="Kiss H."/>
            <person name="Schmutz J."/>
            <person name="Larimer F."/>
            <person name="Land M."/>
            <person name="Kyrpides N."/>
            <person name="Ivanova N."/>
            <person name="Richardson P."/>
        </authorList>
    </citation>
    <scope>NUCLEOTIDE SEQUENCE [LARGE SCALE GENOMIC DNA]</scope>
    <source>
        <strain>ATCC BAA-621 / DSM 15236 / T118</strain>
    </source>
</reference>
<gene>
    <name evidence="1" type="primary">rplR</name>
    <name type="ordered locus">Rfer_4227</name>
</gene>
<organism>
    <name type="scientific">Albidiferax ferrireducens (strain ATCC BAA-621 / DSM 15236 / T118)</name>
    <name type="common">Rhodoferax ferrireducens</name>
    <dbReference type="NCBI Taxonomy" id="338969"/>
    <lineage>
        <taxon>Bacteria</taxon>
        <taxon>Pseudomonadati</taxon>
        <taxon>Pseudomonadota</taxon>
        <taxon>Betaproteobacteria</taxon>
        <taxon>Burkholderiales</taxon>
        <taxon>Comamonadaceae</taxon>
        <taxon>Rhodoferax</taxon>
    </lineage>
</organism>
<protein>
    <recommendedName>
        <fullName evidence="1">Large ribosomal subunit protein uL18</fullName>
    </recommendedName>
    <alternativeName>
        <fullName evidence="2">50S ribosomal protein L18</fullName>
    </alternativeName>
</protein>
<keyword id="KW-1185">Reference proteome</keyword>
<keyword id="KW-0687">Ribonucleoprotein</keyword>
<keyword id="KW-0689">Ribosomal protein</keyword>
<keyword id="KW-0694">RNA-binding</keyword>
<keyword id="KW-0699">rRNA-binding</keyword>